<dbReference type="EC" id="7.1.1.-" evidence="1"/>
<dbReference type="EMBL" id="CP001219">
    <property type="protein sequence ID" value="ACK79417.1"/>
    <property type="molecule type" value="Genomic_DNA"/>
</dbReference>
<dbReference type="RefSeq" id="WP_012537295.1">
    <property type="nucleotide sequence ID" value="NC_011761.1"/>
</dbReference>
<dbReference type="SMR" id="B7J7T2"/>
<dbReference type="STRING" id="243159.AFE_2617"/>
<dbReference type="PaxDb" id="243159-AFE_2617"/>
<dbReference type="GeneID" id="65281666"/>
<dbReference type="KEGG" id="afr:AFE_2617"/>
<dbReference type="eggNOG" id="COG1007">
    <property type="taxonomic scope" value="Bacteria"/>
</dbReference>
<dbReference type="HOGENOM" id="CLU_007100_1_3_6"/>
<dbReference type="Proteomes" id="UP000001362">
    <property type="component" value="Chromosome"/>
</dbReference>
<dbReference type="GO" id="GO:0005886">
    <property type="term" value="C:plasma membrane"/>
    <property type="evidence" value="ECO:0007669"/>
    <property type="project" value="UniProtKB-SubCell"/>
</dbReference>
<dbReference type="GO" id="GO:0008137">
    <property type="term" value="F:NADH dehydrogenase (ubiquinone) activity"/>
    <property type="evidence" value="ECO:0007669"/>
    <property type="project" value="InterPro"/>
</dbReference>
<dbReference type="GO" id="GO:0050136">
    <property type="term" value="F:NADH:ubiquinone reductase (non-electrogenic) activity"/>
    <property type="evidence" value="ECO:0007669"/>
    <property type="project" value="UniProtKB-UniRule"/>
</dbReference>
<dbReference type="GO" id="GO:0048038">
    <property type="term" value="F:quinone binding"/>
    <property type="evidence" value="ECO:0007669"/>
    <property type="project" value="UniProtKB-KW"/>
</dbReference>
<dbReference type="GO" id="GO:0042773">
    <property type="term" value="P:ATP synthesis coupled electron transport"/>
    <property type="evidence" value="ECO:0007669"/>
    <property type="project" value="InterPro"/>
</dbReference>
<dbReference type="HAMAP" id="MF_00445">
    <property type="entry name" value="NDH1_NuoN_1"/>
    <property type="match status" value="1"/>
</dbReference>
<dbReference type="InterPro" id="IPR010096">
    <property type="entry name" value="NADH-Q_OxRdtase_suN/2"/>
</dbReference>
<dbReference type="InterPro" id="IPR001750">
    <property type="entry name" value="ND/Mrp_TM"/>
</dbReference>
<dbReference type="NCBIfam" id="TIGR01770">
    <property type="entry name" value="NDH_I_N"/>
    <property type="match status" value="1"/>
</dbReference>
<dbReference type="NCBIfam" id="NF004442">
    <property type="entry name" value="PRK05777.1-5"/>
    <property type="match status" value="1"/>
</dbReference>
<dbReference type="PANTHER" id="PTHR22773">
    <property type="entry name" value="NADH DEHYDROGENASE"/>
    <property type="match status" value="1"/>
</dbReference>
<dbReference type="Pfam" id="PF00361">
    <property type="entry name" value="Proton_antipo_M"/>
    <property type="match status" value="1"/>
</dbReference>
<dbReference type="PRINTS" id="PR01434">
    <property type="entry name" value="NADHDHGNASE5"/>
</dbReference>
<organism>
    <name type="scientific">Acidithiobacillus ferrooxidans (strain ATCC 23270 / DSM 14882 / CIP 104768 / NCIMB 8455)</name>
    <name type="common">Ferrobacillus ferrooxidans (strain ATCC 23270)</name>
    <dbReference type="NCBI Taxonomy" id="243159"/>
    <lineage>
        <taxon>Bacteria</taxon>
        <taxon>Pseudomonadati</taxon>
        <taxon>Pseudomonadota</taxon>
        <taxon>Acidithiobacillia</taxon>
        <taxon>Acidithiobacillales</taxon>
        <taxon>Acidithiobacillaceae</taxon>
        <taxon>Acidithiobacillus</taxon>
    </lineage>
</organism>
<evidence type="ECO:0000255" key="1">
    <source>
        <dbReference type="HAMAP-Rule" id="MF_00445"/>
    </source>
</evidence>
<protein>
    <recommendedName>
        <fullName evidence="1">NADH-quinone oxidoreductase subunit N</fullName>
        <ecNumber evidence="1">7.1.1.-</ecNumber>
    </recommendedName>
    <alternativeName>
        <fullName evidence="1">NADH dehydrogenase I subunit N</fullName>
    </alternativeName>
    <alternativeName>
        <fullName evidence="1">NDH-1 subunit N</fullName>
    </alternativeName>
</protein>
<feature type="chain" id="PRO_0000391085" description="NADH-quinone oxidoreductase subunit N">
    <location>
        <begin position="1"/>
        <end position="481"/>
    </location>
</feature>
<feature type="transmembrane region" description="Helical" evidence="1">
    <location>
        <begin position="11"/>
        <end position="31"/>
    </location>
</feature>
<feature type="transmembrane region" description="Helical" evidence="1">
    <location>
        <begin position="38"/>
        <end position="58"/>
    </location>
</feature>
<feature type="transmembrane region" description="Helical" evidence="1">
    <location>
        <begin position="69"/>
        <end position="89"/>
    </location>
</feature>
<feature type="transmembrane region" description="Helical" evidence="1">
    <location>
        <begin position="107"/>
        <end position="127"/>
    </location>
</feature>
<feature type="transmembrane region" description="Helical" evidence="1">
    <location>
        <begin position="128"/>
        <end position="148"/>
    </location>
</feature>
<feature type="transmembrane region" description="Helical" evidence="1">
    <location>
        <begin position="162"/>
        <end position="182"/>
    </location>
</feature>
<feature type="transmembrane region" description="Helical" evidence="1">
    <location>
        <begin position="203"/>
        <end position="223"/>
    </location>
</feature>
<feature type="transmembrane region" description="Helical" evidence="1">
    <location>
        <begin position="237"/>
        <end position="257"/>
    </location>
</feature>
<feature type="transmembrane region" description="Helical" evidence="1">
    <location>
        <begin position="271"/>
        <end position="291"/>
    </location>
</feature>
<feature type="transmembrane region" description="Helical" evidence="1">
    <location>
        <begin position="299"/>
        <end position="319"/>
    </location>
</feature>
<feature type="transmembrane region" description="Helical" evidence="1">
    <location>
        <begin position="327"/>
        <end position="347"/>
    </location>
</feature>
<feature type="transmembrane region" description="Helical" evidence="1">
    <location>
        <begin position="370"/>
        <end position="390"/>
    </location>
</feature>
<feature type="transmembrane region" description="Helical" evidence="1">
    <location>
        <begin position="401"/>
        <end position="421"/>
    </location>
</feature>
<feature type="transmembrane region" description="Helical" evidence="1">
    <location>
        <begin position="457"/>
        <end position="477"/>
    </location>
</feature>
<proteinExistence type="inferred from homology"/>
<gene>
    <name evidence="1" type="primary">nuoN</name>
    <name type="ordered locus">AFE_2617</name>
</gene>
<keyword id="KW-0997">Cell inner membrane</keyword>
<keyword id="KW-1003">Cell membrane</keyword>
<keyword id="KW-0472">Membrane</keyword>
<keyword id="KW-0520">NAD</keyword>
<keyword id="KW-0874">Quinone</keyword>
<keyword id="KW-1185">Reference proteome</keyword>
<keyword id="KW-1278">Translocase</keyword>
<keyword id="KW-0812">Transmembrane</keyword>
<keyword id="KW-1133">Transmembrane helix</keyword>
<keyword id="KW-0813">Transport</keyword>
<keyword id="KW-0830">Ubiquinone</keyword>
<reference key="1">
    <citation type="journal article" date="2008" name="BMC Genomics">
        <title>Acidithiobacillus ferrooxidans metabolism: from genome sequence to industrial applications.</title>
        <authorList>
            <person name="Valdes J."/>
            <person name="Pedroso I."/>
            <person name="Quatrini R."/>
            <person name="Dodson R.J."/>
            <person name="Tettelin H."/>
            <person name="Blake R. II"/>
            <person name="Eisen J.A."/>
            <person name="Holmes D.S."/>
        </authorList>
    </citation>
    <scope>NUCLEOTIDE SEQUENCE [LARGE SCALE GENOMIC DNA]</scope>
    <source>
        <strain>ATCC 23270 / DSM 14882 / CIP 104768 / NCIMB 8455</strain>
    </source>
</reference>
<comment type="function">
    <text evidence="1">NDH-1 shuttles electrons from NADH, via FMN and iron-sulfur (Fe-S) centers, to quinones in the respiratory chain. The immediate electron acceptor for the enzyme in this species is believed to be ubiquinone. Couples the redox reaction to proton translocation (for every two electrons transferred, four hydrogen ions are translocated across the cytoplasmic membrane), and thus conserves the redox energy in a proton gradient.</text>
</comment>
<comment type="catalytic activity">
    <reaction evidence="1">
        <text>a quinone + NADH + 5 H(+)(in) = a quinol + NAD(+) + 4 H(+)(out)</text>
        <dbReference type="Rhea" id="RHEA:57888"/>
        <dbReference type="ChEBI" id="CHEBI:15378"/>
        <dbReference type="ChEBI" id="CHEBI:24646"/>
        <dbReference type="ChEBI" id="CHEBI:57540"/>
        <dbReference type="ChEBI" id="CHEBI:57945"/>
        <dbReference type="ChEBI" id="CHEBI:132124"/>
    </reaction>
</comment>
<comment type="subunit">
    <text evidence="1">NDH-1 is composed of 14 different subunits. Subunits NuoA, H, J, K, L, M, N constitute the membrane sector of the complex.</text>
</comment>
<comment type="subcellular location">
    <subcellularLocation>
        <location evidence="1">Cell inner membrane</location>
        <topology evidence="1">Multi-pass membrane protein</topology>
    </subcellularLocation>
</comment>
<comment type="similarity">
    <text evidence="1">Belongs to the complex I subunit 2 family.</text>
</comment>
<sequence length="481" mass="51844">MNSFLMHWTYAIPEIWVLTMACVVLLADLFWGDGLRDLAAVLTVLTLSGAAVLTVFEMGQSGTAFAGLFVLDRFTNVAELFSYLAVLMVVLYSRRYLVDRGIYRGEVFVLLLFALLGIMVMVSGGSLLSVYLGLELLALSQYALVAFYRDSVMATEAGLKYFVLGALASGLLLYGMSLLYGLTGTLDVRDIAADLVNMTAGNLVLVFAIVFIAAGIAFKLGAAPFHMWLPDVYQGAPTVVTAFLASAPKIGAFALIIRLLVDGGYGMQESWQQIFVALTVVSLVVGNVIAIAQQNIKRMLAYSTIGHVGFMLLGIVAGTEAGLASAFFYTVVYTLMSLAGFGMILLVSRAGFEAERIDDFKGLAQRKPWYAFLMMIVMFSMAGVPPTVGFYAKLAVFQAVVAAGYVWLAVVGVLLAVIGAFYYLRVVKVMYFDKPAPDAGLIVRDDLASMALSINSLALLVLGILPGPLMAFCFYAMRGVI</sequence>
<name>NUON_ACIF2</name>
<accession>B7J7T2</accession>